<comment type="catalytic activity">
    <reaction evidence="3">
        <text>a primary alcohol + NAD(+) = an aldehyde + NADH + H(+)</text>
        <dbReference type="Rhea" id="RHEA:10736"/>
        <dbReference type="ChEBI" id="CHEBI:15378"/>
        <dbReference type="ChEBI" id="CHEBI:15734"/>
        <dbReference type="ChEBI" id="CHEBI:17478"/>
        <dbReference type="ChEBI" id="CHEBI:57540"/>
        <dbReference type="ChEBI" id="CHEBI:57945"/>
        <dbReference type="EC" id="1.1.1.1"/>
    </reaction>
</comment>
<comment type="catalytic activity">
    <reaction evidence="3">
        <text>a secondary alcohol + NAD(+) = a ketone + NADH + H(+)</text>
        <dbReference type="Rhea" id="RHEA:10740"/>
        <dbReference type="ChEBI" id="CHEBI:15378"/>
        <dbReference type="ChEBI" id="CHEBI:17087"/>
        <dbReference type="ChEBI" id="CHEBI:35681"/>
        <dbReference type="ChEBI" id="CHEBI:57540"/>
        <dbReference type="ChEBI" id="CHEBI:57945"/>
        <dbReference type="EC" id="1.1.1.1"/>
    </reaction>
</comment>
<comment type="catalytic activity">
    <reaction evidence="3">
        <text>S-(hydroxymethyl)glutathione + NADP(+) = S-formylglutathione + NADPH + H(+)</text>
        <dbReference type="Rhea" id="RHEA:19981"/>
        <dbReference type="ChEBI" id="CHEBI:15378"/>
        <dbReference type="ChEBI" id="CHEBI:57688"/>
        <dbReference type="ChEBI" id="CHEBI:57783"/>
        <dbReference type="ChEBI" id="CHEBI:58349"/>
        <dbReference type="ChEBI" id="CHEBI:58758"/>
        <dbReference type="EC" id="1.1.1.284"/>
    </reaction>
</comment>
<comment type="catalytic activity">
    <reaction evidence="3">
        <text>S-(hydroxymethyl)glutathione + NAD(+) = S-formylglutathione + NADH + H(+)</text>
        <dbReference type="Rhea" id="RHEA:19985"/>
        <dbReference type="ChEBI" id="CHEBI:15378"/>
        <dbReference type="ChEBI" id="CHEBI:57540"/>
        <dbReference type="ChEBI" id="CHEBI:57688"/>
        <dbReference type="ChEBI" id="CHEBI:57945"/>
        <dbReference type="ChEBI" id="CHEBI:58758"/>
        <dbReference type="EC" id="1.1.1.284"/>
    </reaction>
</comment>
<comment type="cofactor">
    <cofactor evidence="3">
        <name>Zn(2+)</name>
        <dbReference type="ChEBI" id="CHEBI:29105"/>
    </cofactor>
    <text evidence="3">Binds 2 Zn(2+) ions per subunit.</text>
</comment>
<comment type="subunit">
    <text evidence="3">Homodimer.</text>
</comment>
<comment type="subcellular location">
    <subcellularLocation>
        <location evidence="2">Cytoplasm</location>
    </subcellularLocation>
</comment>
<comment type="tissue specificity">
    <text evidence="4">Expressed at low levels in the leaves.</text>
</comment>
<comment type="similarity">
    <text evidence="5">Belongs to the zinc-containing alcohol dehydrogenase family. Class-III subfamily.</text>
</comment>
<accession>P93629</accession>
<sequence>MASPTQGQVITCKAAVAYEPNKPLVIEDVQVAPPQAGEVRVKILFTALCHTDHYTWSGKDPEGLFPCILGHEAAGIVESVGEGVTDVQPGDHVIPCYQAECKECKFCKSGKTNLCGKVRSATGVGVMMNDMKSRFSVNGKPIYHFMGTSTFSQYTVVHDVSVAKINPQAPLDKVCLLGCGVPTGLGAVWNTAKVESGSVVAVFGLGTVGLAVAEGAKAAGASRVIGIDIDNKKFDVAKNFGVTEFVNPKEHDKPIQQVLVDLTDGGVDYSFECIGNVSIMRAALECSDKGWGTSVIVGVAASGQEISTRPFQLVTGRVWKGTAFGGFKSRTQVPWLVDKYMKKEIKVDEYITHNMNLADINDAFHLLHEGGCLRCVLAMQI</sequence>
<evidence type="ECO:0000250" key="1">
    <source>
        <dbReference type="UniProtKB" id="P00327"/>
    </source>
</evidence>
<evidence type="ECO:0000250" key="2">
    <source>
        <dbReference type="UniProtKB" id="P06525"/>
    </source>
</evidence>
<evidence type="ECO:0000250" key="3">
    <source>
        <dbReference type="UniProtKB" id="Q96533"/>
    </source>
</evidence>
<evidence type="ECO:0000269" key="4">
    <source>
    </source>
</evidence>
<evidence type="ECO:0000305" key="5"/>
<feature type="chain" id="PRO_0000160772" description="Alcohol dehydrogenase class-3">
    <location>
        <begin position="1"/>
        <end position="381"/>
    </location>
</feature>
<feature type="binding site" evidence="3">
    <location>
        <position position="49"/>
    </location>
    <ligand>
        <name>Zn(2+)</name>
        <dbReference type="ChEBI" id="CHEBI:29105"/>
        <label>1</label>
        <note>catalytic</note>
    </ligand>
</feature>
<feature type="binding site" evidence="3">
    <location>
        <position position="50"/>
    </location>
    <ligand>
        <name>NAD(+)</name>
        <dbReference type="ChEBI" id="CHEBI:57540"/>
    </ligand>
</feature>
<feature type="binding site" evidence="2">
    <location>
        <position position="51"/>
    </location>
    <ligand>
        <name>an alcohol</name>
        <dbReference type="ChEBI" id="CHEBI:30879"/>
    </ligand>
</feature>
<feature type="binding site" evidence="1">
    <location>
        <position position="71"/>
    </location>
    <ligand>
        <name>an alcohol</name>
        <dbReference type="ChEBI" id="CHEBI:30879"/>
    </ligand>
</feature>
<feature type="binding site" evidence="3">
    <location>
        <position position="71"/>
    </location>
    <ligand>
        <name>Zn(2+)</name>
        <dbReference type="ChEBI" id="CHEBI:29105"/>
        <label>1</label>
        <note>catalytic</note>
    </ligand>
</feature>
<feature type="binding site" evidence="3">
    <location>
        <position position="72"/>
    </location>
    <ligand>
        <name>Zn(2+)</name>
        <dbReference type="ChEBI" id="CHEBI:29105"/>
        <label>1</label>
        <note>catalytic</note>
    </ligand>
</feature>
<feature type="binding site" evidence="3">
    <location>
        <position position="101"/>
    </location>
    <ligand>
        <name>Zn(2+)</name>
        <dbReference type="ChEBI" id="CHEBI:29105"/>
        <label>2</label>
    </ligand>
</feature>
<feature type="binding site" evidence="3">
    <location>
        <position position="104"/>
    </location>
    <ligand>
        <name>Zn(2+)</name>
        <dbReference type="ChEBI" id="CHEBI:29105"/>
        <label>2</label>
    </ligand>
</feature>
<feature type="binding site" evidence="3">
    <location>
        <position position="107"/>
    </location>
    <ligand>
        <name>Zn(2+)</name>
        <dbReference type="ChEBI" id="CHEBI:29105"/>
        <label>2</label>
    </ligand>
</feature>
<feature type="binding site" evidence="3">
    <location>
        <position position="115"/>
    </location>
    <ligand>
        <name>Zn(2+)</name>
        <dbReference type="ChEBI" id="CHEBI:29105"/>
        <label>2</label>
    </ligand>
</feature>
<feature type="binding site" evidence="3">
    <location>
        <position position="179"/>
    </location>
    <ligand>
        <name>Zn(2+)</name>
        <dbReference type="ChEBI" id="CHEBI:29105"/>
        <label>1</label>
        <note>catalytic</note>
    </ligand>
</feature>
<feature type="binding site" evidence="3">
    <location>
        <begin position="204"/>
        <end position="209"/>
    </location>
    <ligand>
        <name>NAD(+)</name>
        <dbReference type="ChEBI" id="CHEBI:57540"/>
    </ligand>
</feature>
<feature type="binding site" evidence="3">
    <location>
        <position position="228"/>
    </location>
    <ligand>
        <name>NAD(+)</name>
        <dbReference type="ChEBI" id="CHEBI:57540"/>
    </ligand>
</feature>
<feature type="binding site" evidence="3">
    <location>
        <position position="233"/>
    </location>
    <ligand>
        <name>NAD(+)</name>
        <dbReference type="ChEBI" id="CHEBI:57540"/>
    </ligand>
</feature>
<feature type="binding site" evidence="3">
    <location>
        <position position="274"/>
    </location>
    <ligand>
        <name>NAD(+)</name>
        <dbReference type="ChEBI" id="CHEBI:57540"/>
    </ligand>
</feature>
<feature type="binding site" evidence="3">
    <location>
        <begin position="297"/>
        <end position="299"/>
    </location>
    <ligand>
        <name>NAD(+)</name>
        <dbReference type="ChEBI" id="CHEBI:57540"/>
    </ligand>
</feature>
<feature type="binding site" evidence="3">
    <location>
        <begin position="322"/>
        <end position="324"/>
    </location>
    <ligand>
        <name>NAD(+)</name>
        <dbReference type="ChEBI" id="CHEBI:57540"/>
    </ligand>
</feature>
<feature type="binding site" evidence="3">
    <location>
        <position position="374"/>
    </location>
    <ligand>
        <name>NAD(+)</name>
        <dbReference type="ChEBI" id="CHEBI:57540"/>
    </ligand>
</feature>
<reference key="1">
    <citation type="journal article" date="1997" name="Plant Mol. Biol.">
        <title>Maize glutathione-dependent formaldehyde dehydrogenase cDNA: a novel plant gene of detoxification.</title>
        <authorList>
            <person name="Fliegmann J."/>
            <person name="Sandermann H. Jr."/>
        </authorList>
    </citation>
    <scope>NUCLEOTIDE SEQUENCE [MRNA]</scope>
    <scope>TISSUE SPECIFICITY</scope>
    <source>
        <strain>cv. Black Mexican Sweet</strain>
    </source>
</reference>
<proteinExistence type="evidence at transcript level"/>
<dbReference type="EC" id="1.1.1.1" evidence="3"/>
<dbReference type="EC" id="1.1.1.-"/>
<dbReference type="EC" id="1.1.1.284" evidence="3"/>
<dbReference type="EMBL" id="Y11029">
    <property type="protein sequence ID" value="CAA71913.1"/>
    <property type="molecule type" value="mRNA"/>
</dbReference>
<dbReference type="PIR" id="T03289">
    <property type="entry name" value="T03289"/>
</dbReference>
<dbReference type="RefSeq" id="NP_001105485.1">
    <property type="nucleotide sequence ID" value="NM_001112015.1"/>
</dbReference>
<dbReference type="SMR" id="P93629"/>
<dbReference type="FunCoup" id="P93629">
    <property type="interactions" value="3418"/>
</dbReference>
<dbReference type="STRING" id="4577.P93629"/>
<dbReference type="PaxDb" id="4577-GRMZM5G824600_P03"/>
<dbReference type="GeneID" id="542459"/>
<dbReference type="KEGG" id="zma:542459"/>
<dbReference type="eggNOG" id="KOG0022">
    <property type="taxonomic scope" value="Eukaryota"/>
</dbReference>
<dbReference type="InParanoid" id="P93629"/>
<dbReference type="OrthoDB" id="417550at2759"/>
<dbReference type="Proteomes" id="UP000007305">
    <property type="component" value="Unplaced"/>
</dbReference>
<dbReference type="ExpressionAtlas" id="P93629">
    <property type="expression patterns" value="baseline and differential"/>
</dbReference>
<dbReference type="GO" id="GO:0005829">
    <property type="term" value="C:cytosol"/>
    <property type="evidence" value="ECO:0000318"/>
    <property type="project" value="GO_Central"/>
</dbReference>
<dbReference type="GO" id="GO:0004022">
    <property type="term" value="F:alcohol dehydrogenase (NAD+) activity"/>
    <property type="evidence" value="ECO:0000318"/>
    <property type="project" value="GO_Central"/>
</dbReference>
<dbReference type="GO" id="GO:0106322">
    <property type="term" value="F:S-(hydroxymethyl)glutathione dehydrogenase (NAD+) activity"/>
    <property type="evidence" value="ECO:0007669"/>
    <property type="project" value="RHEA"/>
</dbReference>
<dbReference type="GO" id="GO:0106321">
    <property type="term" value="F:S-(hydroxymethyl)glutathione dehydrogenase (NADP+) activity"/>
    <property type="evidence" value="ECO:0007669"/>
    <property type="project" value="RHEA"/>
</dbReference>
<dbReference type="GO" id="GO:0051903">
    <property type="term" value="F:S-(hydroxymethyl)glutathione dehydrogenase [NAD(P)+] activity"/>
    <property type="evidence" value="ECO:0000318"/>
    <property type="project" value="GO_Central"/>
</dbReference>
<dbReference type="GO" id="GO:0008270">
    <property type="term" value="F:zinc ion binding"/>
    <property type="evidence" value="ECO:0000318"/>
    <property type="project" value="GO_Central"/>
</dbReference>
<dbReference type="GO" id="GO:0046294">
    <property type="term" value="P:formaldehyde catabolic process"/>
    <property type="evidence" value="ECO:0000318"/>
    <property type="project" value="GO_Central"/>
</dbReference>
<dbReference type="CDD" id="cd08300">
    <property type="entry name" value="alcohol_DH_class_III"/>
    <property type="match status" value="1"/>
</dbReference>
<dbReference type="FunFam" id="3.40.50.720:FF:000003">
    <property type="entry name" value="S-(hydroxymethyl)glutathione dehydrogenase"/>
    <property type="match status" value="1"/>
</dbReference>
<dbReference type="FunFam" id="3.90.180.10:FF:000001">
    <property type="entry name" value="S-(hydroxymethyl)glutathione dehydrogenase"/>
    <property type="match status" value="1"/>
</dbReference>
<dbReference type="Gene3D" id="3.90.180.10">
    <property type="entry name" value="Medium-chain alcohol dehydrogenases, catalytic domain"/>
    <property type="match status" value="1"/>
</dbReference>
<dbReference type="Gene3D" id="3.40.50.720">
    <property type="entry name" value="NAD(P)-binding Rossmann-like Domain"/>
    <property type="match status" value="1"/>
</dbReference>
<dbReference type="InterPro" id="IPR013149">
    <property type="entry name" value="ADH-like_C"/>
</dbReference>
<dbReference type="InterPro" id="IPR013154">
    <property type="entry name" value="ADH-like_N"/>
</dbReference>
<dbReference type="InterPro" id="IPR014183">
    <property type="entry name" value="ADH_3"/>
</dbReference>
<dbReference type="InterPro" id="IPR002328">
    <property type="entry name" value="ADH_Zn_CS"/>
</dbReference>
<dbReference type="InterPro" id="IPR011032">
    <property type="entry name" value="GroES-like_sf"/>
</dbReference>
<dbReference type="InterPro" id="IPR036291">
    <property type="entry name" value="NAD(P)-bd_dom_sf"/>
</dbReference>
<dbReference type="NCBIfam" id="TIGR02818">
    <property type="entry name" value="adh_III_F_hyde"/>
    <property type="match status" value="1"/>
</dbReference>
<dbReference type="PANTHER" id="PTHR43880">
    <property type="entry name" value="ALCOHOL DEHYDROGENASE"/>
    <property type="match status" value="1"/>
</dbReference>
<dbReference type="PANTHER" id="PTHR43880:SF58">
    <property type="entry name" value="ALCOHOL DEHYDROGENASE CLASS-3"/>
    <property type="match status" value="1"/>
</dbReference>
<dbReference type="Pfam" id="PF08240">
    <property type="entry name" value="ADH_N"/>
    <property type="match status" value="1"/>
</dbReference>
<dbReference type="Pfam" id="PF00107">
    <property type="entry name" value="ADH_zinc_N"/>
    <property type="match status" value="1"/>
</dbReference>
<dbReference type="SUPFAM" id="SSF50129">
    <property type="entry name" value="GroES-like"/>
    <property type="match status" value="2"/>
</dbReference>
<dbReference type="SUPFAM" id="SSF51735">
    <property type="entry name" value="NAD(P)-binding Rossmann-fold domains"/>
    <property type="match status" value="1"/>
</dbReference>
<dbReference type="PROSITE" id="PS00059">
    <property type="entry name" value="ADH_ZINC"/>
    <property type="match status" value="1"/>
</dbReference>
<organism>
    <name type="scientific">Zea mays</name>
    <name type="common">Maize</name>
    <dbReference type="NCBI Taxonomy" id="4577"/>
    <lineage>
        <taxon>Eukaryota</taxon>
        <taxon>Viridiplantae</taxon>
        <taxon>Streptophyta</taxon>
        <taxon>Embryophyta</taxon>
        <taxon>Tracheophyta</taxon>
        <taxon>Spermatophyta</taxon>
        <taxon>Magnoliopsida</taxon>
        <taxon>Liliopsida</taxon>
        <taxon>Poales</taxon>
        <taxon>Poaceae</taxon>
        <taxon>PACMAD clade</taxon>
        <taxon>Panicoideae</taxon>
        <taxon>Andropogonodae</taxon>
        <taxon>Andropogoneae</taxon>
        <taxon>Tripsacinae</taxon>
        <taxon>Zea</taxon>
    </lineage>
</organism>
<keyword id="KW-0963">Cytoplasm</keyword>
<keyword id="KW-0479">Metal-binding</keyword>
<keyword id="KW-0520">NAD</keyword>
<keyword id="KW-0560">Oxidoreductase</keyword>
<keyword id="KW-1185">Reference proteome</keyword>
<keyword id="KW-0862">Zinc</keyword>
<name>ADHX_MAIZE</name>
<gene>
    <name type="primary">FDH</name>
</gene>
<protein>
    <recommendedName>
        <fullName>Alcohol dehydrogenase class-3</fullName>
        <ecNumber evidence="3">1.1.1.1</ecNumber>
    </recommendedName>
    <alternativeName>
        <fullName>Alcohol dehydrogenase class-III</fullName>
    </alternativeName>
    <alternativeName>
        <fullName>Glutathione-dependent formaldehyde dehydrogenase</fullName>
        <shortName>FALDH</shortName>
        <shortName>FDH</shortName>
        <shortName>GSH-FDH</shortName>
        <ecNumber>1.1.1.-</ecNumber>
    </alternativeName>
    <alternativeName>
        <fullName>S-(hydroxymethyl)glutathione dehydrogenase</fullName>
        <ecNumber evidence="3">1.1.1.284</ecNumber>
    </alternativeName>
</protein>